<sequence>MSLVIPEKFQHILRVLNTNIDGRRKIAFAITAIKGVGRRYAHVVLRKADIDLTKRAGELTEDEVERVITIMQNPRQYKIPDWFLNRQKDVKDGKYSQVLANGLDNKLREDLERLKKIRAHRGLRHFWGLRVRGQHTKTTGRRGRTVGVSKKK</sequence>
<name>RS18_CANLF</name>
<comment type="function">
    <text evidence="1">Component of the small ribosomal subunit. The ribosome is a large ribonucleoprotein complex responsible for the synthesis of proteins in the cell.</text>
</comment>
<comment type="subunit">
    <text evidence="1">Component of the small ribosomal subunit.</text>
</comment>
<comment type="subcellular location">
    <subcellularLocation>
        <location evidence="1">Cytoplasm</location>
    </subcellularLocation>
</comment>
<comment type="similarity">
    <text evidence="2">Belongs to the universal ribosomal protein uS13 family.</text>
</comment>
<gene>
    <name type="primary">RPS18</name>
</gene>
<protein>
    <recommendedName>
        <fullName evidence="2">Small ribosomal subunit protein uS13</fullName>
    </recommendedName>
    <alternativeName>
        <fullName>40S ribosomal protein S18</fullName>
    </alternativeName>
</protein>
<keyword id="KW-0002">3D-structure</keyword>
<keyword id="KW-0007">Acetylation</keyword>
<keyword id="KW-0963">Cytoplasm</keyword>
<keyword id="KW-1017">Isopeptide bond</keyword>
<keyword id="KW-1185">Reference proteome</keyword>
<keyword id="KW-0687">Ribonucleoprotein</keyword>
<keyword id="KW-0689">Ribosomal protein</keyword>
<keyword id="KW-0694">RNA-binding</keyword>
<keyword id="KW-0699">rRNA-binding</keyword>
<keyword id="KW-0832">Ubl conjugation</keyword>
<accession>Q5TJE9</accession>
<reference key="1">
    <citation type="journal article" date="2005" name="Genomics">
        <title>Genomic sequence of the class II region of the canine MHC: comparison with the MHC of other mammalian species.</title>
        <authorList>
            <person name="Debenham S.L."/>
            <person name="Hart E.A."/>
            <person name="Ashurst J.L."/>
            <person name="Howe K.L."/>
            <person name="Quail M.A."/>
            <person name="Ollier W.E.R."/>
            <person name="Binns M.M."/>
        </authorList>
    </citation>
    <scope>NUCLEOTIDE SEQUENCE [LARGE SCALE GENOMIC DNA]</scope>
</reference>
<dbReference type="EMBL" id="AJ630366">
    <property type="protein sequence ID" value="CAI11439.1"/>
    <property type="molecule type" value="Genomic_DNA"/>
</dbReference>
<dbReference type="RefSeq" id="NP_001041547.1">
    <property type="nucleotide sequence ID" value="NM_001048082.1"/>
</dbReference>
<dbReference type="PDB" id="4V5Z">
    <property type="method" value="EM"/>
    <property type="resolution" value="8.70 A"/>
    <property type="chains" value="m=1-152"/>
</dbReference>
<dbReference type="PDBsum" id="4V5Z"/>
<dbReference type="SMR" id="Q5TJE9"/>
<dbReference type="FunCoup" id="Q5TJE9">
    <property type="interactions" value="1866"/>
</dbReference>
<dbReference type="STRING" id="9615.ENSCAFP00000061231"/>
<dbReference type="PaxDb" id="9612-ENSCAFP00000001357"/>
<dbReference type="Ensembl" id="ENSCAFT00000001473.5">
    <property type="protein sequence ID" value="ENSCAFP00000001357.3"/>
    <property type="gene ID" value="ENSCAFG00000000950.5"/>
</dbReference>
<dbReference type="Ensembl" id="ENSCAFT00000069102.2">
    <property type="protein sequence ID" value="ENSCAFP00000052225.1"/>
    <property type="gene ID" value="ENSCAFG00000000950.5"/>
</dbReference>
<dbReference type="Ensembl" id="ENSCAFT00030024505.1">
    <property type="protein sequence ID" value="ENSCAFP00030021390.1"/>
    <property type="gene ID" value="ENSCAFG00030013216.1"/>
</dbReference>
<dbReference type="Ensembl" id="ENSCAFT00030024575.1">
    <property type="protein sequence ID" value="ENSCAFP00030021460.1"/>
    <property type="gene ID" value="ENSCAFG00030013216.1"/>
</dbReference>
<dbReference type="Ensembl" id="ENSCAFT00040038692.1">
    <property type="protein sequence ID" value="ENSCAFP00040033750.1"/>
    <property type="gene ID" value="ENSCAFG00040020851.1"/>
</dbReference>
<dbReference type="Ensembl" id="ENSCAFT00040038732.1">
    <property type="protein sequence ID" value="ENSCAFP00040033785.1"/>
    <property type="gene ID" value="ENSCAFG00040020851.1"/>
</dbReference>
<dbReference type="Ensembl" id="ENSCAFT00845036787.1">
    <property type="protein sequence ID" value="ENSCAFP00845028802.1"/>
    <property type="gene ID" value="ENSCAFG00845020845.1"/>
</dbReference>
<dbReference type="Ensembl" id="ENSCAFT00845036893.1">
    <property type="protein sequence ID" value="ENSCAFP00845028884.1"/>
    <property type="gene ID" value="ENSCAFG00845020845.1"/>
</dbReference>
<dbReference type="GeneID" id="403685"/>
<dbReference type="KEGG" id="cfa:403685"/>
<dbReference type="CTD" id="6222"/>
<dbReference type="VEuPathDB" id="HostDB:ENSCAFG00845020845"/>
<dbReference type="VGNC" id="VGNC:45733">
    <property type="gene designation" value="RPS18"/>
</dbReference>
<dbReference type="eggNOG" id="KOG3311">
    <property type="taxonomic scope" value="Eukaryota"/>
</dbReference>
<dbReference type="GeneTree" id="ENSGT00390000012691"/>
<dbReference type="HOGENOM" id="CLU_103849_0_1_1"/>
<dbReference type="InParanoid" id="Q5TJE9"/>
<dbReference type="OMA" id="SYKGVRH"/>
<dbReference type="OrthoDB" id="1702480at2759"/>
<dbReference type="TreeFam" id="TF317649"/>
<dbReference type="Reactome" id="R-CFA-156827">
    <property type="pathway name" value="L13a-mediated translational silencing of Ceruloplasmin expression"/>
</dbReference>
<dbReference type="Reactome" id="R-CFA-1799339">
    <property type="pathway name" value="SRP-dependent cotranslational protein targeting to membrane"/>
</dbReference>
<dbReference type="Reactome" id="R-CFA-72649">
    <property type="pathway name" value="Translation initiation complex formation"/>
</dbReference>
<dbReference type="Reactome" id="R-CFA-72689">
    <property type="pathway name" value="Formation of a pool of free 40S subunits"/>
</dbReference>
<dbReference type="Reactome" id="R-CFA-72695">
    <property type="pathway name" value="Formation of the ternary complex, and subsequently, the 43S complex"/>
</dbReference>
<dbReference type="Reactome" id="R-CFA-72702">
    <property type="pathway name" value="Ribosomal scanning and start codon recognition"/>
</dbReference>
<dbReference type="Reactome" id="R-CFA-72706">
    <property type="pathway name" value="GTP hydrolysis and joining of the 60S ribosomal subunit"/>
</dbReference>
<dbReference type="Reactome" id="R-CFA-975956">
    <property type="pathway name" value="Nonsense Mediated Decay (NMD) independent of the Exon Junction Complex (EJC)"/>
</dbReference>
<dbReference type="Reactome" id="R-CFA-975957">
    <property type="pathway name" value="Nonsense Mediated Decay (NMD) enhanced by the Exon Junction Complex (EJC)"/>
</dbReference>
<dbReference type="Proteomes" id="UP000002254">
    <property type="component" value="Chromosome 12"/>
</dbReference>
<dbReference type="Proteomes" id="UP000694429">
    <property type="component" value="Chromosome 12"/>
</dbReference>
<dbReference type="Proteomes" id="UP000694542">
    <property type="component" value="Chromosome 12"/>
</dbReference>
<dbReference type="Proteomes" id="UP000805418">
    <property type="component" value="Chromosome 12"/>
</dbReference>
<dbReference type="Bgee" id="ENSCAFG00000000950">
    <property type="expression patterns" value="Expressed in ovary and 48 other cell types or tissues"/>
</dbReference>
<dbReference type="GO" id="GO:0005829">
    <property type="term" value="C:cytosol"/>
    <property type="evidence" value="ECO:0000318"/>
    <property type="project" value="GO_Central"/>
</dbReference>
<dbReference type="GO" id="GO:0022627">
    <property type="term" value="C:cytosolic small ribosomal subunit"/>
    <property type="evidence" value="ECO:0000250"/>
    <property type="project" value="AgBase"/>
</dbReference>
<dbReference type="GO" id="GO:0015935">
    <property type="term" value="C:small ribosomal subunit"/>
    <property type="evidence" value="ECO:0000250"/>
    <property type="project" value="AgBase"/>
</dbReference>
<dbReference type="GO" id="GO:0019843">
    <property type="term" value="F:rRNA binding"/>
    <property type="evidence" value="ECO:0007669"/>
    <property type="project" value="UniProtKB-KW"/>
</dbReference>
<dbReference type="GO" id="GO:0003735">
    <property type="term" value="F:structural constituent of ribosome"/>
    <property type="evidence" value="ECO:0007669"/>
    <property type="project" value="InterPro"/>
</dbReference>
<dbReference type="GO" id="GO:0006412">
    <property type="term" value="P:translation"/>
    <property type="evidence" value="ECO:0007669"/>
    <property type="project" value="InterPro"/>
</dbReference>
<dbReference type="FunFam" id="1.10.8.50:FF:000002">
    <property type="entry name" value="40S ribosomal protein S18"/>
    <property type="match status" value="1"/>
</dbReference>
<dbReference type="FunFam" id="4.10.910.10:FF:000002">
    <property type="entry name" value="40S ribosomal protein S18"/>
    <property type="match status" value="1"/>
</dbReference>
<dbReference type="Gene3D" id="1.10.8.50">
    <property type="match status" value="1"/>
</dbReference>
<dbReference type="Gene3D" id="4.10.910.10">
    <property type="entry name" value="30s ribosomal protein s13, domain 2"/>
    <property type="match status" value="1"/>
</dbReference>
<dbReference type="HAMAP" id="MF_01315">
    <property type="entry name" value="Ribosomal_uS13"/>
    <property type="match status" value="1"/>
</dbReference>
<dbReference type="InterPro" id="IPR027437">
    <property type="entry name" value="Rbsml_uS13_C"/>
</dbReference>
<dbReference type="InterPro" id="IPR001892">
    <property type="entry name" value="Ribosomal_uS13"/>
</dbReference>
<dbReference type="InterPro" id="IPR010979">
    <property type="entry name" value="Ribosomal_uS13-like_H2TH"/>
</dbReference>
<dbReference type="InterPro" id="IPR018269">
    <property type="entry name" value="Ribosomal_uS13_CS"/>
</dbReference>
<dbReference type="NCBIfam" id="NF003140">
    <property type="entry name" value="PRK04053.1"/>
    <property type="match status" value="1"/>
</dbReference>
<dbReference type="PANTHER" id="PTHR10871">
    <property type="entry name" value="30S RIBOSOMAL PROTEIN S13/40S RIBOSOMAL PROTEIN S18"/>
    <property type="match status" value="1"/>
</dbReference>
<dbReference type="PANTHER" id="PTHR10871:SF42">
    <property type="entry name" value="SMALL RIBOSOMAL SUBUNIT PROTEIN US13"/>
    <property type="match status" value="1"/>
</dbReference>
<dbReference type="Pfam" id="PF00416">
    <property type="entry name" value="Ribosomal_S13"/>
    <property type="match status" value="1"/>
</dbReference>
<dbReference type="PIRSF" id="PIRSF002134">
    <property type="entry name" value="Ribosomal_S13"/>
    <property type="match status" value="1"/>
</dbReference>
<dbReference type="SUPFAM" id="SSF46946">
    <property type="entry name" value="S13-like H2TH domain"/>
    <property type="match status" value="1"/>
</dbReference>
<dbReference type="PROSITE" id="PS00646">
    <property type="entry name" value="RIBOSOMAL_S13_1"/>
    <property type="match status" value="1"/>
</dbReference>
<dbReference type="PROSITE" id="PS50159">
    <property type="entry name" value="RIBOSOMAL_S13_2"/>
    <property type="match status" value="1"/>
</dbReference>
<feature type="initiator methionine" description="Removed" evidence="1">
    <location>
        <position position="1"/>
    </location>
</feature>
<feature type="chain" id="PRO_0000132211" description="Small ribosomal subunit protein uS13">
    <location>
        <begin position="2"/>
        <end position="152"/>
    </location>
</feature>
<feature type="modified residue" description="N-acetylserine" evidence="1">
    <location>
        <position position="2"/>
    </location>
</feature>
<feature type="modified residue" description="N6-acetyllysine; alternate" evidence="1">
    <location>
        <position position="94"/>
    </location>
</feature>
<feature type="modified residue" description="N6-acetyllysine; alternate" evidence="1">
    <location>
        <position position="106"/>
    </location>
</feature>
<feature type="cross-link" description="Glycyl lysine isopeptide (Lys-Gly) (interchain with G-Cter in SUMO2)" evidence="1">
    <location>
        <position position="91"/>
    </location>
</feature>
<feature type="cross-link" description="Glycyl lysine isopeptide (Lys-Gly) (interchain with G-Cter in SUMO2); alternate" evidence="1">
    <location>
        <position position="94"/>
    </location>
</feature>
<feature type="cross-link" description="Glycyl lysine isopeptide (Lys-Gly) (interchain with G-Cter in SUMO2); alternate" evidence="1">
    <location>
        <position position="106"/>
    </location>
</feature>
<proteinExistence type="evidence at protein level"/>
<evidence type="ECO:0000250" key="1">
    <source>
        <dbReference type="UniProtKB" id="P62269"/>
    </source>
</evidence>
<evidence type="ECO:0000305" key="2"/>
<organism>
    <name type="scientific">Canis lupus familiaris</name>
    <name type="common">Dog</name>
    <name type="synonym">Canis familiaris</name>
    <dbReference type="NCBI Taxonomy" id="9615"/>
    <lineage>
        <taxon>Eukaryota</taxon>
        <taxon>Metazoa</taxon>
        <taxon>Chordata</taxon>
        <taxon>Craniata</taxon>
        <taxon>Vertebrata</taxon>
        <taxon>Euteleostomi</taxon>
        <taxon>Mammalia</taxon>
        <taxon>Eutheria</taxon>
        <taxon>Laurasiatheria</taxon>
        <taxon>Carnivora</taxon>
        <taxon>Caniformia</taxon>
        <taxon>Canidae</taxon>
        <taxon>Canis</taxon>
    </lineage>
</organism>